<name>NES1_FRAAN</name>
<accession>P0CV94</accession>
<reference key="1">
    <citation type="patent" date="2002-08-22" number="WO02064764">
        <title>Isoprenoid synthases.</title>
        <authorList>
            <person name="Aharoni A."/>
            <person name="Jongsma M.A."/>
            <person name="Verhoeven H.A."/>
            <person name="Bouwmeester H.J."/>
        </authorList>
    </citation>
    <scope>NUCLEOTIDE SEQUENCE [GENOMIC DNA / MRNA]</scope>
    <source>
        <strain>cv. Elsanta</strain>
    </source>
</reference>
<reference key="2">
    <citation type="journal article" date="2004" name="Plant Cell">
        <title>Gain and loss of fruit flavor compounds produced by wild and cultivated strawberry species.</title>
        <authorList>
            <person name="Aharoni A."/>
            <person name="Giri A.P."/>
            <person name="Verstappen F.W."/>
            <person name="Bertea C.M."/>
            <person name="Sevenier R."/>
            <person name="Sun Z."/>
            <person name="Jongsma M.A."/>
            <person name="Schwab W."/>
            <person name="Bouwmeester H.J."/>
        </authorList>
    </citation>
    <scope>NUCLEOTIDE SEQUENCE [GENOMIC DNA / MRNA]</scope>
    <scope>FUNCTION</scope>
    <scope>CATALYTIC ACTIVITY</scope>
    <scope>TISSUE SPECIFICITY</scope>
    <scope>SUBCELLULAR LOCATION</scope>
    <scope>DEVELOPMENTAL STAGE</scope>
    <scope>BIOPHYSICOCHEMICAL PROPERTIES</scope>
    <source>
        <strain>cv. Elsanta</strain>
    </source>
</reference>
<reference key="3">
    <citation type="journal article" date="2003" name="Plant Cell">
        <title>Terpenoid metabolism in wild-type and transgenic Arabidopsis plants.</title>
        <authorList>
            <person name="Aharoni A."/>
            <person name="Giri A.P."/>
            <person name="Deuerlein S."/>
            <person name="Griepink F."/>
            <person name="de Kogel W.J."/>
            <person name="Verstappen F.W."/>
            <person name="Verhoeven H.A."/>
            <person name="Jongsma M.A."/>
            <person name="Schwab W."/>
            <person name="Bouwmeester H.J."/>
        </authorList>
    </citation>
    <scope>FUNCTION</scope>
    <scope>CATALYTIC ACTIVITY</scope>
</reference>
<feature type="chain" id="PRO_0000407980" description="(3S,6E)-nerolidol synthase 1">
    <location>
        <begin position="1"/>
        <end position="519"/>
    </location>
</feature>
<feature type="short sequence motif" description="DDXXD motif">
    <location>
        <begin position="273"/>
        <end position="277"/>
    </location>
</feature>
<feature type="binding site" evidence="1">
    <location>
        <position position="273"/>
    </location>
    <ligand>
        <name>Mg(2+)</name>
        <dbReference type="ChEBI" id="CHEBI:18420"/>
        <label>1</label>
    </ligand>
</feature>
<feature type="binding site" evidence="1">
    <location>
        <position position="273"/>
    </location>
    <ligand>
        <name>Mg(2+)</name>
        <dbReference type="ChEBI" id="CHEBI:18420"/>
        <label>2</label>
    </ligand>
</feature>
<feature type="binding site" evidence="1">
    <location>
        <position position="277"/>
    </location>
    <ligand>
        <name>Mg(2+)</name>
        <dbReference type="ChEBI" id="CHEBI:18420"/>
        <label>1</label>
    </ligand>
</feature>
<feature type="binding site" evidence="1">
    <location>
        <position position="277"/>
    </location>
    <ligand>
        <name>Mg(2+)</name>
        <dbReference type="ChEBI" id="CHEBI:18420"/>
        <label>2</label>
    </ligand>
</feature>
<feature type="binding site" evidence="1">
    <location>
        <position position="417"/>
    </location>
    <ligand>
        <name>Mg(2+)</name>
        <dbReference type="ChEBI" id="CHEBI:18420"/>
        <label>3</label>
    </ligand>
</feature>
<feature type="binding site" evidence="1">
    <location>
        <position position="421"/>
    </location>
    <ligand>
        <name>Mg(2+)</name>
        <dbReference type="ChEBI" id="CHEBI:18420"/>
        <label>3</label>
    </ligand>
</feature>
<feature type="binding site" evidence="1">
    <location>
        <position position="425"/>
    </location>
    <ligand>
        <name>Mg(2+)</name>
        <dbReference type="ChEBI" id="CHEBI:18420"/>
        <label>3</label>
    </ligand>
</feature>
<dbReference type="EC" id="4.2.3.48"/>
<dbReference type="EMBL" id="AX528996">
    <property type="protein sequence ID" value="CAD57081.1"/>
    <property type="molecule type" value="Unassigned_DNA"/>
</dbReference>
<dbReference type="EMBL" id="AX528998">
    <property type="protein sequence ID" value="CAD57082.1"/>
    <property type="molecule type" value="Unassigned_DNA"/>
</dbReference>
<dbReference type="SMR" id="P0CV94"/>
<dbReference type="BRENDA" id="4.2.3.48">
    <property type="organism ID" value="2320"/>
</dbReference>
<dbReference type="SABIO-RK" id="P0CV94"/>
<dbReference type="UniPathway" id="UPA00213"/>
<dbReference type="GO" id="GO:0005829">
    <property type="term" value="C:cytosol"/>
    <property type="evidence" value="ECO:0007669"/>
    <property type="project" value="UniProtKB-SubCell"/>
</dbReference>
<dbReference type="GO" id="GO:0000287">
    <property type="term" value="F:magnesium ion binding"/>
    <property type="evidence" value="ECO:0007669"/>
    <property type="project" value="InterPro"/>
</dbReference>
<dbReference type="GO" id="GO:0010333">
    <property type="term" value="F:terpene synthase activity"/>
    <property type="evidence" value="ECO:0007669"/>
    <property type="project" value="InterPro"/>
</dbReference>
<dbReference type="GO" id="GO:0016102">
    <property type="term" value="P:diterpenoid biosynthetic process"/>
    <property type="evidence" value="ECO:0007669"/>
    <property type="project" value="InterPro"/>
</dbReference>
<dbReference type="CDD" id="cd00684">
    <property type="entry name" value="Terpene_cyclase_plant_C1"/>
    <property type="match status" value="1"/>
</dbReference>
<dbReference type="FunFam" id="1.10.600.10:FF:000007">
    <property type="entry name" value="Isoprene synthase, chloroplastic"/>
    <property type="match status" value="1"/>
</dbReference>
<dbReference type="Gene3D" id="1.10.600.10">
    <property type="entry name" value="Farnesyl Diphosphate Synthase"/>
    <property type="match status" value="1"/>
</dbReference>
<dbReference type="Gene3D" id="1.50.10.130">
    <property type="entry name" value="Terpene synthase, N-terminal domain"/>
    <property type="match status" value="1"/>
</dbReference>
<dbReference type="InterPro" id="IPR008949">
    <property type="entry name" value="Isoprenoid_synthase_dom_sf"/>
</dbReference>
<dbReference type="InterPro" id="IPR034741">
    <property type="entry name" value="Terpene_cyclase-like_1_C"/>
</dbReference>
<dbReference type="InterPro" id="IPR044814">
    <property type="entry name" value="Terpene_cyclase_plant_C1"/>
</dbReference>
<dbReference type="InterPro" id="IPR001906">
    <property type="entry name" value="Terpene_synth_N"/>
</dbReference>
<dbReference type="InterPro" id="IPR036965">
    <property type="entry name" value="Terpene_synth_N_sf"/>
</dbReference>
<dbReference type="InterPro" id="IPR050148">
    <property type="entry name" value="Terpene_synthase-like"/>
</dbReference>
<dbReference type="InterPro" id="IPR005630">
    <property type="entry name" value="Terpene_synthase_metal-bd"/>
</dbReference>
<dbReference type="InterPro" id="IPR008930">
    <property type="entry name" value="Terpenoid_cyclase/PrenylTrfase"/>
</dbReference>
<dbReference type="PANTHER" id="PTHR31225">
    <property type="entry name" value="OS04G0344100 PROTEIN-RELATED"/>
    <property type="match status" value="1"/>
</dbReference>
<dbReference type="PANTHER" id="PTHR31225:SF0">
    <property type="entry name" value="S-(+)-LINALOOL SYNTHASE, CHLOROPLASTIC"/>
    <property type="match status" value="1"/>
</dbReference>
<dbReference type="Pfam" id="PF01397">
    <property type="entry name" value="Terpene_synth"/>
    <property type="match status" value="1"/>
</dbReference>
<dbReference type="Pfam" id="PF03936">
    <property type="entry name" value="Terpene_synth_C"/>
    <property type="match status" value="1"/>
</dbReference>
<dbReference type="SFLD" id="SFLDS00005">
    <property type="entry name" value="Isoprenoid_Synthase_Type_I"/>
    <property type="match status" value="1"/>
</dbReference>
<dbReference type="SFLD" id="SFLDG01019">
    <property type="entry name" value="Terpene_Cyclase_Like_1_C_Termi"/>
    <property type="match status" value="1"/>
</dbReference>
<dbReference type="SUPFAM" id="SSF48239">
    <property type="entry name" value="Terpenoid cyclases/Protein prenyltransferases"/>
    <property type="match status" value="1"/>
</dbReference>
<dbReference type="SUPFAM" id="SSF48576">
    <property type="entry name" value="Terpenoid synthases"/>
    <property type="match status" value="1"/>
</dbReference>
<protein>
    <recommendedName>
        <fullName>(3S,6E)-nerolidol synthase 1</fullName>
        <shortName>FaNES1</shortName>
        <ecNumber>4.2.3.48</ecNumber>
    </recommendedName>
</protein>
<sequence length="519" mass="59785">MNVETKHTRTMGDIFVQHSQKLELLKTVLRNVAELDALEGLNMIDAVQRLGIDYNFQREIDEILHKQMSIVSARDDLHEVALRFRLLRQHGYFVPEDVFNNFKDSKGTFKQVLGEDIKGLMSLYEASQLGTEGEDILVEAEKFSGHLLKTSLSHLDHHRVRIVANTLRNPHHKSLAPFMARNFFVTSQATNSWLNLLKEVAKTDFNMVRSLHQNEIVQMSKWWKELGLAKELKFARDQPLKWYIWSMACLTDPKLSEERVELTKPISFVYLIDDIFDVYGTLDDLILFTEAVNRWEITAIDHLPDYMKICFKALYDMTNEFSSKVYLKHGWNPLQSLKISWASLCNAFLVEAKWFASGKLPKSEEYLKNGIVSSGVNVVLVHMFFLLGQNITRKSVELLNETPAIISSSAAILRLWDDLGSAKDENQDGNDGSYVRCYLEEHEGCSIEEAREKTINMISDEWKKLNRELLSPNPFPASFTLASLNLARMIPLMYSYDGNQCLPSLKEYMKLMLYETVSM</sequence>
<comment type="function">
    <text evidence="2 3">Involved in monoterpene (C10) and sesquiterpene (C15) biosynthesis. Converts geranyl diphosphate (GPP) into S-linalool and farnesyl diphosphate (FPP) into (3S)-E-nerolidol. Exclusively present and highly expressed in the fruit of cultivated (octaploid) varieties.</text>
</comment>
<comment type="catalytic activity">
    <reaction evidence="2 3">
        <text>(2E,6E)-farnesyl diphosphate + H2O = (3S,6E)-nerolidol + diphosphate</text>
        <dbReference type="Rhea" id="RHEA:27530"/>
        <dbReference type="ChEBI" id="CHEBI:15377"/>
        <dbReference type="ChEBI" id="CHEBI:33019"/>
        <dbReference type="ChEBI" id="CHEBI:59958"/>
        <dbReference type="ChEBI" id="CHEBI:175763"/>
        <dbReference type="EC" id="4.2.3.48"/>
    </reaction>
</comment>
<comment type="cofactor">
    <cofactor evidence="1">
        <name>Mg(2+)</name>
        <dbReference type="ChEBI" id="CHEBI:18420"/>
    </cofactor>
    <cofactor evidence="1">
        <name>Mn(2+)</name>
        <dbReference type="ChEBI" id="CHEBI:29035"/>
    </cofactor>
    <text evidence="1">Binds 3 Mg(2+) or Mn(2+) ions per subunit.</text>
</comment>
<comment type="biophysicochemical properties">
    <kinetics>
        <KM evidence="3">8.1 uM for farnesyl diphosphate</KM>
        <KM evidence="3">29 uM for geranyl diphosphate</KM>
        <Vmax evidence="3">2.3 nmol/h/ug enzyme toward geranyl diphosphate</Vmax>
        <Vmax evidence="3">3.0 nmol/h/ug enzyme toward farnesyl diphosphate</Vmax>
    </kinetics>
</comment>
<comment type="pathway">
    <text>Secondary metabolite biosynthesis; terpenoid biosynthesis.</text>
</comment>
<comment type="subcellular location">
    <subcellularLocation>
        <location evidence="3">Cytoplasm</location>
        <location evidence="3">Cytosol</location>
    </subcellularLocation>
</comment>
<comment type="tissue specificity">
    <text evidence="3">Expressed in receptacle tissue. Not detected in leaves or green fruit.</text>
</comment>
<comment type="developmental stage">
    <text evidence="3">Up-regulated during fruit ripening.</text>
</comment>
<comment type="domain">
    <text>The Asp-Asp-Xaa-Xaa-Asp/Glu (DDXXD/E) motif is important for the catalytic activity, presumably through binding to Mg(2+).</text>
</comment>
<comment type="similarity">
    <text evidence="4">Belongs to the terpene synthase family. Tpsg subfamily.</text>
</comment>
<organism>
    <name type="scientific">Fragaria ananassa</name>
    <name type="common">Strawberry</name>
    <name type="synonym">Fragaria chiloensis x Fragaria virginiana</name>
    <dbReference type="NCBI Taxonomy" id="3747"/>
    <lineage>
        <taxon>Eukaryota</taxon>
        <taxon>Viridiplantae</taxon>
        <taxon>Streptophyta</taxon>
        <taxon>Embryophyta</taxon>
        <taxon>Tracheophyta</taxon>
        <taxon>Spermatophyta</taxon>
        <taxon>Magnoliopsida</taxon>
        <taxon>eudicotyledons</taxon>
        <taxon>Gunneridae</taxon>
        <taxon>Pentapetalae</taxon>
        <taxon>rosids</taxon>
        <taxon>fabids</taxon>
        <taxon>Rosales</taxon>
        <taxon>Rosaceae</taxon>
        <taxon>Rosoideae</taxon>
        <taxon>Potentilleae</taxon>
        <taxon>Fragariinae</taxon>
        <taxon>Fragaria</taxon>
    </lineage>
</organism>
<proteinExistence type="evidence at protein level"/>
<keyword id="KW-0963">Cytoplasm</keyword>
<keyword id="KW-0456">Lyase</keyword>
<keyword id="KW-0460">Magnesium</keyword>
<keyword id="KW-0464">Manganese</keyword>
<keyword id="KW-0479">Metal-binding</keyword>
<evidence type="ECO:0000250" key="1"/>
<evidence type="ECO:0000269" key="2">
    <source>
    </source>
</evidence>
<evidence type="ECO:0000269" key="3">
    <source>
    </source>
</evidence>
<evidence type="ECO:0000305" key="4"/>